<gene>
    <name type="ordered locus">Pmob_1549</name>
</gene>
<evidence type="ECO:0000250" key="1"/>
<evidence type="ECO:0000305" key="2"/>
<proteinExistence type="inferred from homology"/>
<feature type="chain" id="PRO_0000381063" description="8-amino-7-oxononanoate synthase">
    <location>
        <begin position="1"/>
        <end position="393"/>
    </location>
</feature>
<feature type="binding site" evidence="1">
    <location>
        <begin position="108"/>
        <end position="109"/>
    </location>
    <ligand>
        <name>pyridoxal 5'-phosphate</name>
        <dbReference type="ChEBI" id="CHEBI:597326"/>
    </ligand>
</feature>
<feature type="binding site" evidence="1">
    <location>
        <position position="133"/>
    </location>
    <ligand>
        <name>substrate</name>
    </ligand>
</feature>
<feature type="binding site" evidence="1">
    <location>
        <position position="182"/>
    </location>
    <ligand>
        <name>pyridoxal 5'-phosphate</name>
        <dbReference type="ChEBI" id="CHEBI:597326"/>
    </ligand>
</feature>
<feature type="binding site" evidence="1">
    <location>
        <begin position="207"/>
        <end position="210"/>
    </location>
    <ligand>
        <name>pyridoxal 5'-phosphate</name>
        <dbReference type="ChEBI" id="CHEBI:597326"/>
    </ligand>
</feature>
<feature type="binding site" evidence="1">
    <location>
        <begin position="238"/>
        <end position="241"/>
    </location>
    <ligand>
        <name>pyridoxal 5'-phosphate</name>
        <dbReference type="ChEBI" id="CHEBI:597326"/>
    </ligand>
</feature>
<feature type="binding site" evidence="1">
    <location>
        <position position="355"/>
    </location>
    <ligand>
        <name>substrate</name>
    </ligand>
</feature>
<feature type="modified residue" description="N6-(pyridoxal phosphate)lysine" evidence="1">
    <location>
        <position position="241"/>
    </location>
</feature>
<organism>
    <name type="scientific">Petrotoga mobilis (strain DSM 10674 / SJ95)</name>
    <dbReference type="NCBI Taxonomy" id="403833"/>
    <lineage>
        <taxon>Bacteria</taxon>
        <taxon>Thermotogati</taxon>
        <taxon>Thermotogota</taxon>
        <taxon>Thermotogae</taxon>
        <taxon>Petrotogales</taxon>
        <taxon>Petrotogaceae</taxon>
        <taxon>Petrotoga</taxon>
    </lineage>
</organism>
<comment type="function">
    <text evidence="1">Catalyzes the decarboxylative condensation of pimeloyl-[acyl-carrier protein] and L-alanine to produce 8-amino-7-oxononanoate (AON), [acyl-carrier protein], and carbon dioxide.</text>
</comment>
<comment type="catalytic activity">
    <reaction>
        <text>6-carboxyhexanoyl-[ACP] + L-alanine + H(+) = (8S)-8-amino-7-oxononanoate + holo-[ACP] + CO2</text>
        <dbReference type="Rhea" id="RHEA:42288"/>
        <dbReference type="Rhea" id="RHEA-COMP:9685"/>
        <dbReference type="Rhea" id="RHEA-COMP:9955"/>
        <dbReference type="ChEBI" id="CHEBI:15378"/>
        <dbReference type="ChEBI" id="CHEBI:16526"/>
        <dbReference type="ChEBI" id="CHEBI:57972"/>
        <dbReference type="ChEBI" id="CHEBI:64479"/>
        <dbReference type="ChEBI" id="CHEBI:78846"/>
        <dbReference type="ChEBI" id="CHEBI:149468"/>
        <dbReference type="EC" id="2.3.1.47"/>
    </reaction>
</comment>
<comment type="cofactor">
    <cofactor evidence="1">
        <name>pyridoxal 5'-phosphate</name>
        <dbReference type="ChEBI" id="CHEBI:597326"/>
    </cofactor>
</comment>
<comment type="pathway">
    <text>Cofactor biosynthesis; biotin biosynthesis.</text>
</comment>
<comment type="subunit">
    <text evidence="1">Homodimer.</text>
</comment>
<comment type="similarity">
    <text evidence="2">Belongs to the class-II pyridoxal-phosphate-dependent aminotransferase family. BioF subfamily.</text>
</comment>
<dbReference type="EC" id="2.3.1.47"/>
<dbReference type="EMBL" id="CP000879">
    <property type="protein sequence ID" value="ABX32250.1"/>
    <property type="molecule type" value="Genomic_DNA"/>
</dbReference>
<dbReference type="RefSeq" id="WP_012209348.1">
    <property type="nucleotide sequence ID" value="NC_010003.1"/>
</dbReference>
<dbReference type="SMR" id="A9BGL0"/>
<dbReference type="STRING" id="403833.Pmob_1549"/>
<dbReference type="KEGG" id="pmo:Pmob_1549"/>
<dbReference type="eggNOG" id="COG0156">
    <property type="taxonomic scope" value="Bacteria"/>
</dbReference>
<dbReference type="HOGENOM" id="CLU_015846_11_0_0"/>
<dbReference type="OrthoDB" id="9807157at2"/>
<dbReference type="UniPathway" id="UPA00078"/>
<dbReference type="Proteomes" id="UP000000789">
    <property type="component" value="Chromosome"/>
</dbReference>
<dbReference type="GO" id="GO:0008710">
    <property type="term" value="F:8-amino-7-oxononanoate synthase activity"/>
    <property type="evidence" value="ECO:0000250"/>
    <property type="project" value="UniProtKB"/>
</dbReference>
<dbReference type="GO" id="GO:0008890">
    <property type="term" value="F:glycine C-acetyltransferase activity"/>
    <property type="evidence" value="ECO:0000250"/>
    <property type="project" value="UniProtKB"/>
</dbReference>
<dbReference type="GO" id="GO:0030170">
    <property type="term" value="F:pyridoxal phosphate binding"/>
    <property type="evidence" value="ECO:0000250"/>
    <property type="project" value="UniProtKB"/>
</dbReference>
<dbReference type="GO" id="GO:0009102">
    <property type="term" value="P:biotin biosynthetic process"/>
    <property type="evidence" value="ECO:0000250"/>
    <property type="project" value="UniProtKB"/>
</dbReference>
<dbReference type="CDD" id="cd06454">
    <property type="entry name" value="KBL_like"/>
    <property type="match status" value="1"/>
</dbReference>
<dbReference type="FunFam" id="3.90.1150.10:FF:000004">
    <property type="entry name" value="2-amino-3-ketobutyrate coenzyme A ligase"/>
    <property type="match status" value="1"/>
</dbReference>
<dbReference type="FunFam" id="3.40.640.10:FF:000006">
    <property type="entry name" value="5-aminolevulinate synthase, mitochondrial"/>
    <property type="match status" value="1"/>
</dbReference>
<dbReference type="Gene3D" id="3.90.1150.10">
    <property type="entry name" value="Aspartate Aminotransferase, domain 1"/>
    <property type="match status" value="1"/>
</dbReference>
<dbReference type="Gene3D" id="3.40.640.10">
    <property type="entry name" value="Type I PLP-dependent aspartate aminotransferase-like (Major domain)"/>
    <property type="match status" value="1"/>
</dbReference>
<dbReference type="InterPro" id="IPR001917">
    <property type="entry name" value="Aminotrans_II_pyridoxalP_BS"/>
</dbReference>
<dbReference type="InterPro" id="IPR004839">
    <property type="entry name" value="Aminotransferase_I/II_large"/>
</dbReference>
<dbReference type="InterPro" id="IPR050087">
    <property type="entry name" value="AON_synthase_class-II"/>
</dbReference>
<dbReference type="InterPro" id="IPR010962">
    <property type="entry name" value="AONS_Archaea/Firmicutes"/>
</dbReference>
<dbReference type="InterPro" id="IPR004723">
    <property type="entry name" value="AONS_Archaea/Proteobacteria"/>
</dbReference>
<dbReference type="InterPro" id="IPR015424">
    <property type="entry name" value="PyrdxlP-dep_Trfase"/>
</dbReference>
<dbReference type="InterPro" id="IPR015421">
    <property type="entry name" value="PyrdxlP-dep_Trfase_major"/>
</dbReference>
<dbReference type="InterPro" id="IPR015422">
    <property type="entry name" value="PyrdxlP-dep_Trfase_small"/>
</dbReference>
<dbReference type="NCBIfam" id="TIGR00858">
    <property type="entry name" value="bioF"/>
    <property type="match status" value="1"/>
</dbReference>
<dbReference type="NCBIfam" id="TIGR01825">
    <property type="entry name" value="gly_Cac_T_rel"/>
    <property type="match status" value="1"/>
</dbReference>
<dbReference type="NCBIfam" id="NF005394">
    <property type="entry name" value="PRK06939.1"/>
    <property type="match status" value="1"/>
</dbReference>
<dbReference type="PANTHER" id="PTHR13693">
    <property type="entry name" value="CLASS II AMINOTRANSFERASE/8-AMINO-7-OXONONANOATE SYNTHASE"/>
    <property type="match status" value="1"/>
</dbReference>
<dbReference type="PANTHER" id="PTHR13693:SF3">
    <property type="entry name" value="LD36009P"/>
    <property type="match status" value="1"/>
</dbReference>
<dbReference type="Pfam" id="PF00155">
    <property type="entry name" value="Aminotran_1_2"/>
    <property type="match status" value="1"/>
</dbReference>
<dbReference type="SUPFAM" id="SSF53383">
    <property type="entry name" value="PLP-dependent transferases"/>
    <property type="match status" value="1"/>
</dbReference>
<dbReference type="PROSITE" id="PS00599">
    <property type="entry name" value="AA_TRANSFER_CLASS_2"/>
    <property type="match status" value="1"/>
</dbReference>
<sequence length="393" mass="43506">MDFYEQLREELKKLEDSGLLITIRTLESAQGAWININGKKVLNMCSNNYLGLANNERLKEAAINAIKNWGVGPGAVRTIAGTMKIHEELEKKLAEFKKVEATLVVQSGFNANQAVIPTITNEEDGILSDELNHASIIDGVRLSKAKRYIWKHKDLNSLEEQLVKAQRDNCRRKLIITDGVFSMDGDIAPLPGIVELAKKYDALVMVDDAHGEGVLGENGRGIADHFNLTEEVDIEIGTLSKAFGVVGGFIAGKKVLIDYLKQQARPFLFSSSLSPAETAAALEATKILYESDDLVKKLWDNAKYFQSKIKEMGYDIGGTETPITPVMIYDEKKTKEFSSKLYEEGIFASSIVYPTVPKGKARIRVMISALHSKEDLDFALSKFEKIGKSLGTL</sequence>
<reference key="1">
    <citation type="submission" date="2007-11" db="EMBL/GenBank/DDBJ databases">
        <title>Complete sequence of Petroga mobilis SJ95.</title>
        <authorList>
            <consortium name="US DOE Joint Genome Institute"/>
            <person name="Copeland A."/>
            <person name="Lucas S."/>
            <person name="Lapidus A."/>
            <person name="Barry K."/>
            <person name="Glavina del Rio T."/>
            <person name="Dalin E."/>
            <person name="Tice H."/>
            <person name="Pitluck S."/>
            <person name="Meincke L."/>
            <person name="Brettin T."/>
            <person name="Bruce D."/>
            <person name="Detter J.C."/>
            <person name="Han C."/>
            <person name="Kuske C.R."/>
            <person name="Schmutz J."/>
            <person name="Larimer F."/>
            <person name="Land M."/>
            <person name="Hauser L."/>
            <person name="Kyrpides N."/>
            <person name="Mikhailova N."/>
            <person name="Noll K."/>
            <person name="Richardson P."/>
        </authorList>
    </citation>
    <scope>NUCLEOTIDE SEQUENCE [LARGE SCALE GENOMIC DNA]</scope>
    <source>
        <strain>DSM 10674 / SJ95</strain>
    </source>
</reference>
<accession>A9BGL0</accession>
<protein>
    <recommendedName>
        <fullName>8-amino-7-oxononanoate synthase</fullName>
        <shortName>AONS</shortName>
        <ecNumber>2.3.1.47</ecNumber>
    </recommendedName>
    <alternativeName>
        <fullName>7-keto-8-amino-pelargonic acid synthase</fullName>
        <shortName>7-KAP synthase</shortName>
        <shortName>KAPA synthase</shortName>
    </alternativeName>
    <alternativeName>
        <fullName>8-amino-7-ketopelargonate synthase</fullName>
    </alternativeName>
    <alternativeName>
        <fullName>Alpha-oxoamine synthase</fullName>
    </alternativeName>
</protein>
<name>BIOF_PETMO</name>
<keyword id="KW-0012">Acyltransferase</keyword>
<keyword id="KW-0093">Biotin biosynthesis</keyword>
<keyword id="KW-0663">Pyridoxal phosphate</keyword>
<keyword id="KW-0808">Transferase</keyword>